<reference key="1">
    <citation type="submission" date="2006-10" db="EMBL/GenBank/DDBJ databases">
        <title>Complete sequence of Syntrophobacter fumaroxidans MPOB.</title>
        <authorList>
            <consortium name="US DOE Joint Genome Institute"/>
            <person name="Copeland A."/>
            <person name="Lucas S."/>
            <person name="Lapidus A."/>
            <person name="Barry K."/>
            <person name="Detter J.C."/>
            <person name="Glavina del Rio T."/>
            <person name="Hammon N."/>
            <person name="Israni S."/>
            <person name="Pitluck S."/>
            <person name="Goltsman E.G."/>
            <person name="Martinez M."/>
            <person name="Schmutz J."/>
            <person name="Larimer F."/>
            <person name="Land M."/>
            <person name="Hauser L."/>
            <person name="Kyrpides N."/>
            <person name="Kim E."/>
            <person name="Boone D.R."/>
            <person name="Brockman F."/>
            <person name="Culley D."/>
            <person name="Ferry J."/>
            <person name="Gunsalus R."/>
            <person name="McInerney M.J."/>
            <person name="Morrison M."/>
            <person name="Plugge C."/>
            <person name="Rohlin L."/>
            <person name="Scholten J."/>
            <person name="Sieber J."/>
            <person name="Stams A.J.M."/>
            <person name="Worm P."/>
            <person name="Henstra A.M."/>
            <person name="Richardson P."/>
        </authorList>
    </citation>
    <scope>NUCLEOTIDE SEQUENCE [LARGE SCALE GENOMIC DNA]</scope>
    <source>
        <strain>DSM 10017 / MPOB</strain>
    </source>
</reference>
<keyword id="KW-0066">ATP synthesis</keyword>
<keyword id="KW-0997">Cell inner membrane</keyword>
<keyword id="KW-1003">Cell membrane</keyword>
<keyword id="KW-0139">CF(1)</keyword>
<keyword id="KW-0375">Hydrogen ion transport</keyword>
<keyword id="KW-0406">Ion transport</keyword>
<keyword id="KW-0472">Membrane</keyword>
<keyword id="KW-1185">Reference proteome</keyword>
<keyword id="KW-0813">Transport</keyword>
<comment type="function">
    <text evidence="1">Produces ATP from ADP in the presence of a proton gradient across the membrane.</text>
</comment>
<comment type="subunit">
    <text evidence="1">F-type ATPases have 2 components, CF(1) - the catalytic core - and CF(0) - the membrane proton channel. CF(1) has five subunits: alpha(3), beta(3), gamma(1), delta(1), epsilon(1). CF(0) has three main subunits: a, b and c.</text>
</comment>
<comment type="subcellular location">
    <subcellularLocation>
        <location evidence="1">Cell inner membrane</location>
        <topology evidence="1">Peripheral membrane protein</topology>
    </subcellularLocation>
</comment>
<comment type="similarity">
    <text evidence="1">Belongs to the ATPase epsilon chain family.</text>
</comment>
<name>ATPE_SYNFM</name>
<gene>
    <name evidence="1" type="primary">atpC</name>
    <name type="ordered locus">Sfum_2581</name>
</gene>
<evidence type="ECO:0000255" key="1">
    <source>
        <dbReference type="HAMAP-Rule" id="MF_00530"/>
    </source>
</evidence>
<organism>
    <name type="scientific">Syntrophobacter fumaroxidans (strain DSM 10017 / MPOB)</name>
    <dbReference type="NCBI Taxonomy" id="335543"/>
    <lineage>
        <taxon>Bacteria</taxon>
        <taxon>Pseudomonadati</taxon>
        <taxon>Thermodesulfobacteriota</taxon>
        <taxon>Syntrophobacteria</taxon>
        <taxon>Syntrophobacterales</taxon>
        <taxon>Syntrophobacteraceae</taxon>
        <taxon>Syntrophobacter</taxon>
    </lineage>
</organism>
<feature type="chain" id="PRO_1000056545" description="ATP synthase epsilon chain">
    <location>
        <begin position="1"/>
        <end position="134"/>
    </location>
</feature>
<dbReference type="EMBL" id="CP000478">
    <property type="protein sequence ID" value="ABK18259.1"/>
    <property type="molecule type" value="Genomic_DNA"/>
</dbReference>
<dbReference type="RefSeq" id="WP_011699427.1">
    <property type="nucleotide sequence ID" value="NC_008554.1"/>
</dbReference>
<dbReference type="SMR" id="A0LLF7"/>
<dbReference type="FunCoup" id="A0LLF7">
    <property type="interactions" value="356"/>
</dbReference>
<dbReference type="STRING" id="335543.Sfum_2581"/>
<dbReference type="KEGG" id="sfu:Sfum_2581"/>
<dbReference type="eggNOG" id="COG0355">
    <property type="taxonomic scope" value="Bacteria"/>
</dbReference>
<dbReference type="HOGENOM" id="CLU_084338_1_3_7"/>
<dbReference type="InParanoid" id="A0LLF7"/>
<dbReference type="OrthoDB" id="9799969at2"/>
<dbReference type="Proteomes" id="UP000001784">
    <property type="component" value="Chromosome"/>
</dbReference>
<dbReference type="GO" id="GO:0005886">
    <property type="term" value="C:plasma membrane"/>
    <property type="evidence" value="ECO:0007669"/>
    <property type="project" value="UniProtKB-SubCell"/>
</dbReference>
<dbReference type="GO" id="GO:0045259">
    <property type="term" value="C:proton-transporting ATP synthase complex"/>
    <property type="evidence" value="ECO:0007669"/>
    <property type="project" value="UniProtKB-KW"/>
</dbReference>
<dbReference type="GO" id="GO:0005524">
    <property type="term" value="F:ATP binding"/>
    <property type="evidence" value="ECO:0007669"/>
    <property type="project" value="UniProtKB-UniRule"/>
</dbReference>
<dbReference type="GO" id="GO:0046933">
    <property type="term" value="F:proton-transporting ATP synthase activity, rotational mechanism"/>
    <property type="evidence" value="ECO:0007669"/>
    <property type="project" value="UniProtKB-UniRule"/>
</dbReference>
<dbReference type="CDD" id="cd12152">
    <property type="entry name" value="F1-ATPase_delta"/>
    <property type="match status" value="1"/>
</dbReference>
<dbReference type="Gene3D" id="1.20.5.440">
    <property type="entry name" value="ATP synthase delta/epsilon subunit, C-terminal domain"/>
    <property type="match status" value="1"/>
</dbReference>
<dbReference type="Gene3D" id="2.60.15.10">
    <property type="entry name" value="F0F1 ATP synthase delta/epsilon subunit, N-terminal"/>
    <property type="match status" value="1"/>
</dbReference>
<dbReference type="HAMAP" id="MF_00530">
    <property type="entry name" value="ATP_synth_epsil_bac"/>
    <property type="match status" value="1"/>
</dbReference>
<dbReference type="InterPro" id="IPR036794">
    <property type="entry name" value="ATP_F1_dsu/esu_C_sf"/>
</dbReference>
<dbReference type="InterPro" id="IPR001469">
    <property type="entry name" value="ATP_synth_F1_dsu/esu"/>
</dbReference>
<dbReference type="InterPro" id="IPR020546">
    <property type="entry name" value="ATP_synth_F1_dsu/esu_N"/>
</dbReference>
<dbReference type="InterPro" id="IPR020547">
    <property type="entry name" value="ATP_synth_F1_esu_C"/>
</dbReference>
<dbReference type="InterPro" id="IPR036771">
    <property type="entry name" value="ATPsynth_dsu/esu_N"/>
</dbReference>
<dbReference type="NCBIfam" id="TIGR01216">
    <property type="entry name" value="ATP_synt_epsi"/>
    <property type="match status" value="1"/>
</dbReference>
<dbReference type="NCBIfam" id="NF001846">
    <property type="entry name" value="PRK00571.1-3"/>
    <property type="match status" value="1"/>
</dbReference>
<dbReference type="NCBIfam" id="NF009980">
    <property type="entry name" value="PRK13446.1"/>
    <property type="match status" value="1"/>
</dbReference>
<dbReference type="PANTHER" id="PTHR13822">
    <property type="entry name" value="ATP SYNTHASE DELTA/EPSILON CHAIN"/>
    <property type="match status" value="1"/>
</dbReference>
<dbReference type="PANTHER" id="PTHR13822:SF10">
    <property type="entry name" value="ATP SYNTHASE EPSILON CHAIN, CHLOROPLASTIC"/>
    <property type="match status" value="1"/>
</dbReference>
<dbReference type="Pfam" id="PF00401">
    <property type="entry name" value="ATP-synt_DE"/>
    <property type="match status" value="1"/>
</dbReference>
<dbReference type="Pfam" id="PF02823">
    <property type="entry name" value="ATP-synt_DE_N"/>
    <property type="match status" value="1"/>
</dbReference>
<dbReference type="SUPFAM" id="SSF46604">
    <property type="entry name" value="Epsilon subunit of F1F0-ATP synthase C-terminal domain"/>
    <property type="match status" value="1"/>
</dbReference>
<dbReference type="SUPFAM" id="SSF51344">
    <property type="entry name" value="Epsilon subunit of F1F0-ATP synthase N-terminal domain"/>
    <property type="match status" value="1"/>
</dbReference>
<proteinExistence type="inferred from homology"/>
<protein>
    <recommendedName>
        <fullName evidence="1">ATP synthase epsilon chain</fullName>
    </recommendedName>
    <alternativeName>
        <fullName evidence="1">ATP synthase F1 sector epsilon subunit</fullName>
    </alternativeName>
    <alternativeName>
        <fullName evidence="1">F-ATPase epsilon subunit</fullName>
    </alternativeName>
</protein>
<sequence length="134" mass="14828">MAEKIKLEIVTPEKKVLSEMVDIVVAPGQEGEFGVLPHHIPFLSKLKVGELRYRIGQTLRCVAIMGGYAEVLPDQVTILAPAAEEAGEIDVIRAKAARERAERRLAETKDRLEFTRAQAALQRAVARLKVAEKT</sequence>
<accession>A0LLF7</accession>